<evidence type="ECO:0000255" key="1"/>
<evidence type="ECO:0000255" key="2">
    <source>
        <dbReference type="PROSITE-ProRule" id="PRU01266"/>
    </source>
</evidence>
<evidence type="ECO:0000305" key="3"/>
<organism>
    <name type="scientific">Synechocystis sp. (strain ATCC 27184 / PCC 6803 / Kazusa)</name>
    <dbReference type="NCBI Taxonomy" id="1111708"/>
    <lineage>
        <taxon>Bacteria</taxon>
        <taxon>Bacillati</taxon>
        <taxon>Cyanobacteriota</taxon>
        <taxon>Cyanophyceae</taxon>
        <taxon>Synechococcales</taxon>
        <taxon>Merismopediaceae</taxon>
        <taxon>Synechocystis</taxon>
    </lineage>
</organism>
<feature type="chain" id="PRO_0000157884" description="Uncharacterized methyltransferase sll1242">
    <location>
        <begin position="1"/>
        <end position="536"/>
    </location>
</feature>
<feature type="domain" description="Radical SAM core" evidence="2">
    <location>
        <begin position="163"/>
        <end position="394"/>
    </location>
</feature>
<feature type="binding site" evidence="1">
    <location>
        <position position="177"/>
    </location>
    <ligand>
        <name>[4Fe-4S] cluster</name>
        <dbReference type="ChEBI" id="CHEBI:49883"/>
        <note>4Fe-4S-S-AdoMet</note>
    </ligand>
</feature>
<feature type="binding site" evidence="1">
    <location>
        <position position="181"/>
    </location>
    <ligand>
        <name>[4Fe-4S] cluster</name>
        <dbReference type="ChEBI" id="CHEBI:49883"/>
        <note>4Fe-4S-S-AdoMet</note>
    </ligand>
</feature>
<feature type="binding site" evidence="1">
    <location>
        <position position="184"/>
    </location>
    <ligand>
        <name>[4Fe-4S] cluster</name>
        <dbReference type="ChEBI" id="CHEBI:49883"/>
        <note>4Fe-4S-S-AdoMet</note>
    </ligand>
</feature>
<accession>P42349</accession>
<reference key="1">
    <citation type="journal article" date="1996" name="DNA Res.">
        <title>Sequence analysis of the genome of the unicellular cyanobacterium Synechocystis sp. strain PCC6803. II. Sequence determination of the entire genome and assignment of potential protein-coding regions.</title>
        <authorList>
            <person name="Kaneko T."/>
            <person name="Sato S."/>
            <person name="Kotani H."/>
            <person name="Tanaka A."/>
            <person name="Asamizu E."/>
            <person name="Nakamura Y."/>
            <person name="Miyajima N."/>
            <person name="Hirosawa M."/>
            <person name="Sugiura M."/>
            <person name="Sasamoto S."/>
            <person name="Kimura T."/>
            <person name="Hosouchi T."/>
            <person name="Matsuno A."/>
            <person name="Muraki A."/>
            <person name="Nakazaki N."/>
            <person name="Naruo K."/>
            <person name="Okumura S."/>
            <person name="Shimpo S."/>
            <person name="Takeuchi C."/>
            <person name="Wada T."/>
            <person name="Watanabe A."/>
            <person name="Yamada M."/>
            <person name="Yasuda M."/>
            <person name="Tabata S."/>
        </authorList>
    </citation>
    <scope>NUCLEOTIDE SEQUENCE [LARGE SCALE GENOMIC DNA]</scope>
    <source>
        <strain>ATCC 27184 / PCC 6803 / Kazusa</strain>
    </source>
</reference>
<reference key="2">
    <citation type="journal article" date="1993" name="Plant Mol. Biol.">
        <title>Structure of a cyanobacterial gene encoding the 50S ribosomal protein L9.</title>
        <authorList>
            <person name="Malakhov M.P."/>
            <person name="Wada H."/>
            <person name="Los D.A."/>
            <person name="Sakamoto T."/>
            <person name="Murata N."/>
        </authorList>
    </citation>
    <scope>NUCLEOTIDE SEQUENCE [GENOMIC DNA] OF 291-536</scope>
</reference>
<protein>
    <recommendedName>
        <fullName>Uncharacterized methyltransferase sll1242</fullName>
        <ecNumber>2.1.1.-</ecNumber>
    </recommendedName>
    <alternativeName>
        <fullName>ORF N</fullName>
    </alternativeName>
</protein>
<keyword id="KW-0004">4Fe-4S</keyword>
<keyword id="KW-0408">Iron</keyword>
<keyword id="KW-0411">Iron-sulfur</keyword>
<keyword id="KW-0479">Metal-binding</keyword>
<keyword id="KW-0489">Methyltransferase</keyword>
<keyword id="KW-1185">Reference proteome</keyword>
<keyword id="KW-0949">S-adenosyl-L-methionine</keyword>
<keyword id="KW-0808">Transferase</keyword>
<dbReference type="EC" id="2.1.1.-"/>
<dbReference type="EMBL" id="BA000022">
    <property type="protein sequence ID" value="BAA18175.1"/>
    <property type="molecule type" value="Genomic_DNA"/>
</dbReference>
<dbReference type="EMBL" id="D10716">
    <property type="protein sequence ID" value="BAA38817.1"/>
    <property type="molecule type" value="Genomic_DNA"/>
</dbReference>
<dbReference type="PIR" id="S75614">
    <property type="entry name" value="S75614"/>
</dbReference>
<dbReference type="SMR" id="P42349"/>
<dbReference type="STRING" id="1148.gene:10499048"/>
<dbReference type="PaxDb" id="1148-1653260"/>
<dbReference type="EnsemblBacteria" id="BAA18175">
    <property type="protein sequence ID" value="BAA18175"/>
    <property type="gene ID" value="BAA18175"/>
</dbReference>
<dbReference type="KEGG" id="syn:sll1242"/>
<dbReference type="eggNOG" id="COG1032">
    <property type="taxonomic scope" value="Bacteria"/>
</dbReference>
<dbReference type="InParanoid" id="P42349"/>
<dbReference type="PhylomeDB" id="P42349"/>
<dbReference type="Proteomes" id="UP000001425">
    <property type="component" value="Chromosome"/>
</dbReference>
<dbReference type="GO" id="GO:0051539">
    <property type="term" value="F:4 iron, 4 sulfur cluster binding"/>
    <property type="evidence" value="ECO:0007669"/>
    <property type="project" value="UniProtKB-KW"/>
</dbReference>
<dbReference type="GO" id="GO:0031419">
    <property type="term" value="F:cobalamin binding"/>
    <property type="evidence" value="ECO:0007669"/>
    <property type="project" value="InterPro"/>
</dbReference>
<dbReference type="GO" id="GO:0046872">
    <property type="term" value="F:metal ion binding"/>
    <property type="evidence" value="ECO:0007669"/>
    <property type="project" value="UniProtKB-KW"/>
</dbReference>
<dbReference type="GO" id="GO:0008168">
    <property type="term" value="F:methyltransferase activity"/>
    <property type="evidence" value="ECO:0007669"/>
    <property type="project" value="UniProtKB-KW"/>
</dbReference>
<dbReference type="GO" id="GO:0032259">
    <property type="term" value="P:methylation"/>
    <property type="evidence" value="ECO:0007669"/>
    <property type="project" value="UniProtKB-KW"/>
</dbReference>
<dbReference type="CDD" id="cd02068">
    <property type="entry name" value="radical_SAM_B12_BD"/>
    <property type="match status" value="1"/>
</dbReference>
<dbReference type="Gene3D" id="3.40.50.280">
    <property type="entry name" value="Cobalamin-binding domain"/>
    <property type="match status" value="1"/>
</dbReference>
<dbReference type="Gene3D" id="3.80.30.20">
    <property type="entry name" value="tm_1862 like domain"/>
    <property type="match status" value="1"/>
</dbReference>
<dbReference type="InterPro" id="IPR006158">
    <property type="entry name" value="Cobalamin-bd"/>
</dbReference>
<dbReference type="InterPro" id="IPR025274">
    <property type="entry name" value="DUF4070"/>
</dbReference>
<dbReference type="InterPro" id="IPR006638">
    <property type="entry name" value="Elp3/MiaA/NifB-like_rSAM"/>
</dbReference>
<dbReference type="InterPro" id="IPR034530">
    <property type="entry name" value="HpnP-like"/>
</dbReference>
<dbReference type="InterPro" id="IPR007197">
    <property type="entry name" value="rSAM"/>
</dbReference>
<dbReference type="InterPro" id="IPR023404">
    <property type="entry name" value="rSAM_horseshoe"/>
</dbReference>
<dbReference type="InterPro" id="IPR051198">
    <property type="entry name" value="Tetrapyrrole_Bchl_Biosynth_MTs"/>
</dbReference>
<dbReference type="PANTHER" id="PTHR43409">
    <property type="entry name" value="ANAEROBIC MAGNESIUM-PROTOPORPHYRIN IX MONOMETHYL ESTER CYCLASE-RELATED"/>
    <property type="match status" value="1"/>
</dbReference>
<dbReference type="PANTHER" id="PTHR43409:SF3">
    <property type="entry name" value="HYPOTHETICAL METHYLTRANSFERASE"/>
    <property type="match status" value="1"/>
</dbReference>
<dbReference type="Pfam" id="PF02310">
    <property type="entry name" value="B12-binding"/>
    <property type="match status" value="1"/>
</dbReference>
<dbReference type="Pfam" id="PF13282">
    <property type="entry name" value="DUF4070"/>
    <property type="match status" value="1"/>
</dbReference>
<dbReference type="Pfam" id="PF04055">
    <property type="entry name" value="Radical_SAM"/>
    <property type="match status" value="1"/>
</dbReference>
<dbReference type="SFLD" id="SFLDF00303">
    <property type="entry name" value="hopanoid_C2-methyltransferase"/>
    <property type="match status" value="1"/>
</dbReference>
<dbReference type="SFLD" id="SFLDS00029">
    <property type="entry name" value="Radical_SAM"/>
    <property type="match status" value="1"/>
</dbReference>
<dbReference type="SMART" id="SM00729">
    <property type="entry name" value="Elp3"/>
    <property type="match status" value="1"/>
</dbReference>
<dbReference type="SUPFAM" id="SSF102114">
    <property type="entry name" value="Radical SAM enzymes"/>
    <property type="match status" value="1"/>
</dbReference>
<dbReference type="PROSITE" id="PS51918">
    <property type="entry name" value="RADICAL_SAM"/>
    <property type="match status" value="1"/>
</dbReference>
<gene>
    <name type="ordered locus">sll1242</name>
</gene>
<name>Y1242_SYNY3</name>
<comment type="cofactor">
    <cofactor evidence="3">
        <name>[4Fe-4S] cluster</name>
        <dbReference type="ChEBI" id="CHEBI:49883"/>
    </cofactor>
    <text evidence="3">Binds 1 [4Fe-4S] cluster. The cluster is coordinated with 3 cysteines and an exchangeable S-adenosyl-L-methionine.</text>
</comment>
<sequence>MRALLIYPLFPPTFWSYEKILELVGRKVLLPPLGLITVAGILPQEWEFKLVDRNVRNVTEAEWDWAEVVIISGMIVQRDDMVENIKEAKAHGKLVAVGGPFATSVPDEVQNAGADFLILDEGEITLPLFVEALERGETAGIIRAQEKPDVTTTPIPRYDLLELDAYDSMSVQFSRGCPFQCEFCDIIVLYGRKPRTKEPAQLLRELDYLYELGWRRSVFMVDDNFIGNKRNVKLLLKELKVWQEEHQYPFRFNTEASVDLADDQELMDLMVECYFDAVFLGIETPDEESLEFTKKFQNTRNSLADSVDKIIKAGLRPMAGFIIGFDGEKQGAGDRIVRFAEQTAIPTTTFAMLQALPNTALWHRLKRENRLLDESKGNINQTTLMNFIPTRPLEDIANEYVEAFWELYDPHGYLDRNYRCFLKLGAPKCKTAFKLPNLVDLKALAIVIWRQGVKRDTRFRFWHHAFGILRHNPAVFEHYITLCAHNEHFLQYREIVRQEIGEQLRDYLSRQQQDKVEETVLSPTAIAAETEKVLAS</sequence>
<proteinExistence type="predicted"/>